<protein>
    <recommendedName>
        <fullName evidence="4">Collagen, type I, alpha 1a</fullName>
        <shortName evidence="4">col1a1a</shortName>
    </recommendedName>
    <alternativeName>
        <fullName evidence="4">Alpha-1 type I collagen</fullName>
    </alternativeName>
</protein>
<reference evidence="4" key="1">
    <citation type="submission" date="2023-05" db="UniProtKB">
        <title>Grouping groupers in the Mediterranean: ecological baselines revealed by ancient proteins.</title>
        <authorList>
            <person name="Winter R.M."/>
            <person name="de Kock W."/>
            <person name="Mackie M."/>
            <person name="Ramsoe M."/>
            <person name="Desidera E."/>
            <person name="Collins M."/>
            <person name="Guidetti P."/>
            <person name="Presslee S."/>
            <person name="Munoz-Alegre M."/>
            <person name="Oueslati T."/>
            <person name="Morales-Muniz A."/>
            <person name="Michailidis D."/>
            <person name="van den Hurk Y."/>
            <person name="Cakirlar C."/>
        </authorList>
    </citation>
    <scope>PROTEIN SEQUENCE</scope>
    <scope>IDENTIFICATION BY MASS SPECTROMETRY</scope>
    <source>
        <tissue evidence="3">Bone</tissue>
    </source>
</reference>
<organism evidence="3">
    <name type="scientific">Epinephelus caninus</name>
    <name type="common">Dogtooth grouper</name>
    <name type="synonym">Serranus caninus</name>
    <dbReference type="NCBI Taxonomy" id="179534"/>
    <lineage>
        <taxon>Eukaryota</taxon>
        <taxon>Metazoa</taxon>
        <taxon>Chordata</taxon>
        <taxon>Craniata</taxon>
        <taxon>Vertebrata</taxon>
        <taxon>Euteleostomi</taxon>
        <taxon>Actinopterygii</taxon>
        <taxon>Neopterygii</taxon>
        <taxon>Teleostei</taxon>
        <taxon>Neoteleostei</taxon>
        <taxon>Acanthomorphata</taxon>
        <taxon>Eupercaria</taxon>
        <taxon>Perciformes</taxon>
        <taxon>Serranoidei</taxon>
        <taxon>Serranidae</taxon>
        <taxon>Epinephelinae</taxon>
        <taxon>Epinephelini</taxon>
        <taxon>Epinephelus</taxon>
    </lineage>
</organism>
<evidence type="ECO:0000255" key="1">
    <source>
        <dbReference type="PROSITE-ProRule" id="PRU00793"/>
    </source>
</evidence>
<evidence type="ECO:0000256" key="2">
    <source>
        <dbReference type="SAM" id="MobiDB-lite"/>
    </source>
</evidence>
<evidence type="ECO:0000303" key="3">
    <source ref="1"/>
</evidence>
<evidence type="ECO:0000305" key="4"/>
<feature type="chain" id="PRO_0000459607" description="Collagen, type I, alpha 1a">
    <location>
        <begin position="1"/>
        <end position="1095"/>
    </location>
</feature>
<feature type="domain" description="Fibrillar collagen NC1" evidence="1">
    <location>
        <begin position="1062"/>
        <end position="1095"/>
    </location>
</feature>
<feature type="region of interest" description="Disordered" evidence="2">
    <location>
        <begin position="1"/>
        <end position="1011"/>
    </location>
</feature>
<feature type="compositionally biased region" description="Pro residues" evidence="2">
    <location>
        <begin position="1"/>
        <end position="21"/>
    </location>
</feature>
<feature type="compositionally biased region" description="Low complexity" evidence="2">
    <location>
        <begin position="22"/>
        <end position="49"/>
    </location>
</feature>
<feature type="compositionally biased region" description="Basic and acidic residues" evidence="2">
    <location>
        <begin position="58"/>
        <end position="72"/>
    </location>
</feature>
<feature type="compositionally biased region" description="Low complexity" evidence="2">
    <location>
        <begin position="127"/>
        <end position="145"/>
    </location>
</feature>
<feature type="compositionally biased region" description="Pro residues" evidence="2">
    <location>
        <begin position="147"/>
        <end position="160"/>
    </location>
</feature>
<feature type="compositionally biased region" description="Gly residues" evidence="2">
    <location>
        <begin position="161"/>
        <end position="179"/>
    </location>
</feature>
<feature type="compositionally biased region" description="Low complexity" evidence="2">
    <location>
        <begin position="180"/>
        <end position="223"/>
    </location>
</feature>
<feature type="compositionally biased region" description="Low complexity" evidence="2">
    <location>
        <begin position="232"/>
        <end position="270"/>
    </location>
</feature>
<feature type="compositionally biased region" description="Low complexity" evidence="2">
    <location>
        <begin position="288"/>
        <end position="297"/>
    </location>
</feature>
<feature type="compositionally biased region" description="Gly residues" evidence="2">
    <location>
        <begin position="299"/>
        <end position="311"/>
    </location>
</feature>
<feature type="compositionally biased region" description="Low complexity" evidence="2">
    <location>
        <begin position="385"/>
        <end position="400"/>
    </location>
</feature>
<feature type="compositionally biased region" description="Low complexity" evidence="2">
    <location>
        <begin position="477"/>
        <end position="489"/>
    </location>
</feature>
<feature type="compositionally biased region" description="Low complexity" evidence="2">
    <location>
        <begin position="498"/>
        <end position="544"/>
    </location>
</feature>
<feature type="compositionally biased region" description="Low complexity" evidence="2">
    <location>
        <begin position="577"/>
        <end position="592"/>
    </location>
</feature>
<feature type="compositionally biased region" description="Gly residues" evidence="2">
    <location>
        <begin position="602"/>
        <end position="611"/>
    </location>
</feature>
<feature type="compositionally biased region" description="Low complexity" evidence="2">
    <location>
        <begin position="625"/>
        <end position="661"/>
    </location>
</feature>
<feature type="compositionally biased region" description="Low complexity" evidence="2">
    <location>
        <begin position="675"/>
        <end position="697"/>
    </location>
</feature>
<feature type="compositionally biased region" description="Pro residues" evidence="2">
    <location>
        <begin position="699"/>
        <end position="712"/>
    </location>
</feature>
<feature type="compositionally biased region" description="Low complexity" evidence="2">
    <location>
        <begin position="804"/>
        <end position="822"/>
    </location>
</feature>
<feature type="compositionally biased region" description="Pro residues" evidence="2">
    <location>
        <begin position="848"/>
        <end position="858"/>
    </location>
</feature>
<feature type="compositionally biased region" description="Low complexity" evidence="2">
    <location>
        <begin position="872"/>
        <end position="893"/>
    </location>
</feature>
<feature type="compositionally biased region" description="Basic and acidic residues" evidence="2">
    <location>
        <begin position="894"/>
        <end position="908"/>
    </location>
</feature>
<feature type="compositionally biased region" description="Low complexity" evidence="2">
    <location>
        <begin position="924"/>
        <end position="960"/>
    </location>
</feature>
<feature type="compositionally biased region" description="Pro residues" evidence="2">
    <location>
        <begin position="976"/>
        <end position="988"/>
    </location>
</feature>
<feature type="non-consecutive residues" evidence="3">
    <location>
        <begin position="82"/>
        <end position="83"/>
    </location>
</feature>
<feature type="non-consecutive residues" evidence="3">
    <location>
        <begin position="748"/>
        <end position="749"/>
    </location>
</feature>
<feature type="non-consecutive residues" evidence="3">
    <location>
        <begin position="762"/>
        <end position="763"/>
    </location>
</feature>
<feature type="non-consecutive residues" evidence="3">
    <location>
        <begin position="969"/>
        <end position="970"/>
    </location>
</feature>
<feature type="non-consecutive residues" evidence="3">
    <location>
        <begin position="1014"/>
        <end position="1015"/>
    </location>
</feature>
<feature type="non-consecutive residues" evidence="3">
    <location>
        <begin position="1048"/>
        <end position="1049"/>
    </location>
</feature>
<feature type="non-consecutive residues" evidence="3">
    <location>
        <begin position="1067"/>
        <end position="1068"/>
    </location>
</feature>
<feature type="non-terminal residue" evidence="3">
    <location>
        <position position="1"/>
    </location>
</feature>
<proteinExistence type="evidence at protein level"/>
<accession>C0HM93</accession>
<dbReference type="GO" id="GO:0005581">
    <property type="term" value="C:collagen trimer"/>
    <property type="evidence" value="ECO:0007669"/>
    <property type="project" value="UniProtKB-KW"/>
</dbReference>
<dbReference type="GO" id="GO:0031012">
    <property type="term" value="C:extracellular matrix"/>
    <property type="evidence" value="ECO:0007669"/>
    <property type="project" value="TreeGrafter"/>
</dbReference>
<dbReference type="GO" id="GO:0005615">
    <property type="term" value="C:extracellular space"/>
    <property type="evidence" value="ECO:0007669"/>
    <property type="project" value="TreeGrafter"/>
</dbReference>
<dbReference type="GO" id="GO:0005201">
    <property type="term" value="F:extracellular matrix structural constituent"/>
    <property type="evidence" value="ECO:0007669"/>
    <property type="project" value="InterPro"/>
</dbReference>
<dbReference type="Gene3D" id="2.60.120.1000">
    <property type="match status" value="1"/>
</dbReference>
<dbReference type="InterPro" id="IPR008160">
    <property type="entry name" value="Collagen"/>
</dbReference>
<dbReference type="InterPro" id="IPR050149">
    <property type="entry name" value="Collagen_superfamily"/>
</dbReference>
<dbReference type="InterPro" id="IPR000885">
    <property type="entry name" value="Fib_collagen_C"/>
</dbReference>
<dbReference type="PANTHER" id="PTHR24023">
    <property type="entry name" value="COLLAGEN ALPHA"/>
    <property type="match status" value="1"/>
</dbReference>
<dbReference type="PANTHER" id="PTHR24023:SF1082">
    <property type="entry name" value="COLLAGEN TRIPLE HELIX REPEAT"/>
    <property type="match status" value="1"/>
</dbReference>
<dbReference type="Pfam" id="PF01410">
    <property type="entry name" value="COLFI"/>
    <property type="match status" value="1"/>
</dbReference>
<dbReference type="Pfam" id="PF01391">
    <property type="entry name" value="Collagen"/>
    <property type="match status" value="10"/>
</dbReference>
<dbReference type="SMART" id="SM00038">
    <property type="entry name" value="COLFI"/>
    <property type="match status" value="1"/>
</dbReference>
<keyword id="KW-0176">Collagen</keyword>
<keyword id="KW-0903">Direct protein sequencing</keyword>
<keyword id="KW-0272">Extracellular matrix</keyword>
<keyword id="KW-0964">Secreted</keyword>
<sequence>SPAMPVPGPMGPMGPRGPPGSPGASGPQGFTGPPGEPGEAGSAGAMGPRGPAGPPGKNGEDGESGKPGRGGERGPPGPQGARGFSGLDGAKGDSGPAGPKGESGAPGENGTPGAMGPRGLPGERGRTGAAGAAGARGNDGAAGAAGPPGPTGPAGPPGFPGGPGAKGDAGAQGGRGPEGPAGARGEPGNPGPAGAAGPSGNPGTDGAAGPKGTPGAAGVAGAPGFPGPRGPSGPQGAAGAPGPKGNTGEVGAPGAKGEAGAKGEAGAPGVQGPPGPSGEEGKRGARGEPGAAGARGAPGERGGPGGRGFPGSDGPAGPKGATGERGAPGAVGPKGATGESGRTGEPGLPGAKGMTGSPGSPGPDGKTGPAGPSGQDGRPGPPGPVGARGQPGVMGFPGPKGAAGEGGKPGERGVMGPTGAAGAPGKDGDVGAPGPSGPAGPAGERGEQGPAGAPGFQGLPGPQGALGETGKPGEQGLPGEAGATGPAGARGDRGFPGERGAPGALGPAGARGSPGSXGNDGAKGDAGAPGAPGAQGPPGLQGMPGERGAAGLPGLRGDRGDQGAKGADGAPGKDGPRGLTGPLGLPGPAGATGDKGEPGPAGPVGPGGARGAPGERGESGPPGPAGFAGPPGADGQPGAKGEAGDNGAKGDAGPPGAAGPTGAPGPQGPVGNTGPKGARGAAGPPGATGFPGAAGRVGPPGPSGNPGPPGPAGGPGKEGPKGNRGETGPAGRTGEVGAAGPPGPAGEKSAGLPGPQGLAGQRGLPGQRGERGFPGLPGPAXEPGKPGPSGPGGERGPPGPMGPPGLAGAPGEPGREGSPGNEGSAGRDGAAGPKGDRGESGPSGAPGAPGPPGAPGPVGPAGKNGDRGETGPAGPAGSAGPAGPRGPAGALGLRGDKGESGEAGERGMKGHRGFTGMQGPPGPAGSSGEQGPAGAAGPAGPRGPAGSAGSPGKDGMSGLPGPTGPPGPRSGEMGPAGPPGPPGPPGAPGAPGGGFDLGFLSQPQEKAPDPYRMYDDANVLRDRDLEVDSTLKSLSQQLEQLRSPDGTRFTYSVLEDGCTSHTGTWGKLPLLDLAPMDVGAPDQEFGLEVGPVCFL</sequence>
<comment type="subcellular location">
    <subcellularLocation>
        <location evidence="1">Secreted</location>
        <location evidence="1">Extracellular space</location>
        <location evidence="1">Extracellular matrix</location>
    </subcellularLocation>
</comment>
<comment type="similarity">
    <text evidence="1">Belongs to the fibrillar collagen family.</text>
</comment>
<name>CO1AA_EPICA</name>